<keyword id="KW-0284">Flavonoid biosynthesis</keyword>
<keyword id="KW-0521">NADP</keyword>
<keyword id="KW-0560">Oxidoreductase</keyword>
<keyword id="KW-1185">Reference proteome</keyword>
<organism evidence="6">
    <name type="scientific">Vitis vinifera</name>
    <name type="common">Grape</name>
    <dbReference type="NCBI Taxonomy" id="29760"/>
    <lineage>
        <taxon>Eukaryota</taxon>
        <taxon>Viridiplantae</taxon>
        <taxon>Streptophyta</taxon>
        <taxon>Embryophyta</taxon>
        <taxon>Tracheophyta</taxon>
        <taxon>Spermatophyta</taxon>
        <taxon>Magnoliopsida</taxon>
        <taxon>eudicotyledons</taxon>
        <taxon>Gunneridae</taxon>
        <taxon>Pentapetalae</taxon>
        <taxon>rosids</taxon>
        <taxon>Vitales</taxon>
        <taxon>Vitaceae</taxon>
        <taxon>Viteae</taxon>
        <taxon>Vitis</taxon>
    </lineage>
</organism>
<accession>D7U6G6</accession>
<reference key="1">
    <citation type="journal article" date="2007" name="Nature">
        <title>The grapevine genome sequence suggests ancestral hexaploidization in major angiosperm phyla.</title>
        <authorList>
            <person name="Jaillon O."/>
            <person name="Aury J.-M."/>
            <person name="Noel B."/>
            <person name="Policriti A."/>
            <person name="Clepet C."/>
            <person name="Casagrande A."/>
            <person name="Choisne N."/>
            <person name="Aubourg S."/>
            <person name="Vitulo N."/>
            <person name="Jubin C."/>
            <person name="Vezzi A."/>
            <person name="Legeai F."/>
            <person name="Hugueney P."/>
            <person name="Dasilva C."/>
            <person name="Horner D."/>
            <person name="Mica E."/>
            <person name="Jublot D."/>
            <person name="Poulain J."/>
            <person name="Bruyere C."/>
            <person name="Billault A."/>
            <person name="Segurens B."/>
            <person name="Gouyvenoux M."/>
            <person name="Ugarte E."/>
            <person name="Cattonaro F."/>
            <person name="Anthouard V."/>
            <person name="Vico V."/>
            <person name="Del Fabbro C."/>
            <person name="Alaux M."/>
            <person name="Di Gaspero G."/>
            <person name="Dumas V."/>
            <person name="Felice N."/>
            <person name="Paillard S."/>
            <person name="Juman I."/>
            <person name="Moroldo M."/>
            <person name="Scalabrin S."/>
            <person name="Canaguier A."/>
            <person name="Le Clainche I."/>
            <person name="Malacrida G."/>
            <person name="Durand E."/>
            <person name="Pesole G."/>
            <person name="Laucou V."/>
            <person name="Chatelet P."/>
            <person name="Merdinoglu D."/>
            <person name="Delledonne M."/>
            <person name="Pezzotti M."/>
            <person name="Lecharny A."/>
            <person name="Scarpelli C."/>
            <person name="Artiguenave F."/>
            <person name="Pe M.E."/>
            <person name="Valle G."/>
            <person name="Morgante M."/>
            <person name="Caboche M."/>
            <person name="Adam-Blondon A.-F."/>
            <person name="Weissenbach J."/>
            <person name="Quetier F."/>
            <person name="Wincker P."/>
        </authorList>
    </citation>
    <scope>NUCLEOTIDE SEQUENCE [LARGE SCALE GENOMIC DNA]</scope>
    <source>
        <strain>cv. Pinot noir / PN40024</strain>
    </source>
</reference>
<protein>
    <recommendedName>
        <fullName evidence="3">Anthocyanidin reductase ((2S)-flavan-3-ol-forming)</fullName>
        <shortName evidence="3">VvANR</shortName>
        <ecNumber evidence="3">1.3.1.112</ecNumber>
    </recommendedName>
</protein>
<gene>
    <name evidence="3" type="primary">ANR</name>
    <name evidence="5" type="ORF">VIT_00s0361g00040</name>
</gene>
<sequence>MATQHPIGKKTACVVGGTGFVASLLVKLLLQKGYAVNTTVRDPDNQKKVSHLLELQELGDLKIFRADLTDELSFEAPIAGCDFVFHVATPVHFASEDPENDMIKPAVQGVVNVMKACTRAKSVKRVILTSSAAAVTINQLDGTGLVVDEKNWTDIEFLTSAKPPTWGYPASKTLAEKAAWKFAEENNIDLITVIPTLMAGSSLTSDVPSSIGLAMSLITGNEFLINGMKGMQMLSGSVSIAHVEDVCRAHIFVAEKESASGRYICCAANTSVPELAKFLSKRYPQYKVPTDFGDFPSKSKLIISSDKLVKEGFSFKYGIEEIYDESVEYFKAKGLLQN</sequence>
<feature type="chain" id="PRO_0000438273" description="Anthocyanidin reductase ((2S)-flavan-3-ol-forming)">
    <location>
        <begin position="1"/>
        <end position="338"/>
    </location>
</feature>
<feature type="binding site" evidence="2">
    <location>
        <begin position="18"/>
        <end position="21"/>
    </location>
    <ligand>
        <name>NADP(+)</name>
        <dbReference type="ChEBI" id="CHEBI:58349"/>
    </ligand>
</feature>
<feature type="binding site" evidence="1">
    <location>
        <position position="48"/>
    </location>
    <ligand>
        <name>NADP(+)</name>
        <dbReference type="ChEBI" id="CHEBI:58349"/>
    </ligand>
</feature>
<feature type="binding site" evidence="2">
    <location>
        <begin position="87"/>
        <end position="90"/>
    </location>
    <ligand>
        <name>NADP(+)</name>
        <dbReference type="ChEBI" id="CHEBI:58349"/>
    </ligand>
</feature>
<feature type="binding site" evidence="1">
    <location>
        <position position="168"/>
    </location>
    <ligand>
        <name>NADP(+)</name>
        <dbReference type="ChEBI" id="CHEBI:58349"/>
    </ligand>
</feature>
<dbReference type="EC" id="1.3.1.112" evidence="3"/>
<dbReference type="EMBL" id="FN597047">
    <property type="protein sequence ID" value="CBI38335.3"/>
    <property type="molecule type" value="Genomic_DNA"/>
</dbReference>
<dbReference type="SMR" id="D7U6G6"/>
<dbReference type="FunCoup" id="D7U6G6">
    <property type="interactions" value="165"/>
</dbReference>
<dbReference type="STRING" id="29760.D7U6G6"/>
<dbReference type="PaxDb" id="29760-VIT_00s0361g00040.t01"/>
<dbReference type="EnsemblPlants" id="Vitvi10g02185_t001">
    <property type="protein sequence ID" value="Vitvi10g02185_P001"/>
    <property type="gene ID" value="Vitvi10g02185"/>
</dbReference>
<dbReference type="Gramene" id="Vitvi10g02185_t001">
    <property type="protein sequence ID" value="Vitvi10g02185_P001"/>
    <property type="gene ID" value="Vitvi10g02185"/>
</dbReference>
<dbReference type="eggNOG" id="KOG1502">
    <property type="taxonomic scope" value="Eukaryota"/>
</dbReference>
<dbReference type="HOGENOM" id="CLU_007383_9_0_1"/>
<dbReference type="InParanoid" id="D7U6G6"/>
<dbReference type="OMA" id="ICCAYNT"/>
<dbReference type="OrthoDB" id="2735536at2759"/>
<dbReference type="UniPathway" id="UPA00154"/>
<dbReference type="Proteomes" id="UP000009183">
    <property type="component" value="Unassembled WGS sequence, unordered"/>
</dbReference>
<dbReference type="ExpressionAtlas" id="D7U6G6">
    <property type="expression patterns" value="baseline and differential"/>
</dbReference>
<dbReference type="GO" id="GO:0033729">
    <property type="term" value="F:anthocyanidin reductase activity"/>
    <property type="evidence" value="ECO:0000318"/>
    <property type="project" value="GO_Central"/>
</dbReference>
<dbReference type="GO" id="GO:0016616">
    <property type="term" value="F:oxidoreductase activity, acting on the CH-OH group of donors, NAD or NADP as acceptor"/>
    <property type="evidence" value="ECO:0000318"/>
    <property type="project" value="GO_Central"/>
</dbReference>
<dbReference type="GO" id="GO:0009813">
    <property type="term" value="P:flavonoid biosynthetic process"/>
    <property type="evidence" value="ECO:0007669"/>
    <property type="project" value="UniProtKB-UniPathway"/>
</dbReference>
<dbReference type="CDD" id="cd05193">
    <property type="entry name" value="AR_like_SDR_e"/>
    <property type="match status" value="1"/>
</dbReference>
<dbReference type="FunFam" id="3.40.50.720:FF:000085">
    <property type="entry name" value="Dihydroflavonol reductase"/>
    <property type="match status" value="1"/>
</dbReference>
<dbReference type="Gene3D" id="3.40.50.720">
    <property type="entry name" value="NAD(P)-binding Rossmann-like Domain"/>
    <property type="match status" value="1"/>
</dbReference>
<dbReference type="InterPro" id="IPR001509">
    <property type="entry name" value="Epimerase_deHydtase"/>
</dbReference>
<dbReference type="InterPro" id="IPR036291">
    <property type="entry name" value="NAD(P)-bd_dom_sf"/>
</dbReference>
<dbReference type="InterPro" id="IPR050425">
    <property type="entry name" value="NAD(P)_dehydrat-like"/>
</dbReference>
<dbReference type="PANTHER" id="PTHR10366:SF288">
    <property type="entry name" value="ANTHOCYANIDIN REDUCTASE"/>
    <property type="match status" value="1"/>
</dbReference>
<dbReference type="PANTHER" id="PTHR10366">
    <property type="entry name" value="NAD DEPENDENT EPIMERASE/DEHYDRATASE"/>
    <property type="match status" value="1"/>
</dbReference>
<dbReference type="Pfam" id="PF01370">
    <property type="entry name" value="Epimerase"/>
    <property type="match status" value="1"/>
</dbReference>
<dbReference type="SUPFAM" id="SSF51735">
    <property type="entry name" value="NAD(P)-binding Rossmann-fold domains"/>
    <property type="match status" value="1"/>
</dbReference>
<name>ANRPN_VITVI</name>
<proteinExistence type="inferred from homology"/>
<evidence type="ECO:0000250" key="1">
    <source>
        <dbReference type="UniProtKB" id="A0A059TC02"/>
    </source>
</evidence>
<evidence type="ECO:0000250" key="2">
    <source>
        <dbReference type="UniProtKB" id="P93799"/>
    </source>
</evidence>
<evidence type="ECO:0000250" key="3">
    <source>
        <dbReference type="UniProtKB" id="Q5FB34"/>
    </source>
</evidence>
<evidence type="ECO:0000305" key="4"/>
<evidence type="ECO:0000312" key="5">
    <source>
        <dbReference type="EMBL" id="CBI38335.3"/>
    </source>
</evidence>
<evidence type="ECO:0000312" key="6">
    <source>
        <dbReference type="Proteomes" id="UP000009183"/>
    </source>
</evidence>
<comment type="function">
    <text evidence="3">Produces the terminal flavan-3-ol monomers required for the formation of proanthocyanidins or condensed tannins in leaves and flowers, as well as in the skin and seeds of developing berries. Behaves as a reductase and as a C-3 epimerase. Catalyzes the double reduction of anthocyanidins, producing a mixture of (2S,3S)- and (2S,3R)-flavan-3-ols. The enzyme catalyzes sequential hydride transfers to C-2 and C-4, respectively and epimerization at C-3 is achieved by tautomerization that occurs between the two hydride transfers. Converts cyanidin, pelargonidin and delphinidin into catechin and epicatechin, afzelechin and epiafzelechin, and gallocatechin and epigallocatechin respectively.</text>
</comment>
<comment type="catalytic activity">
    <reaction evidence="3">
        <text>a (2S,3R)-flavan-3-ol + 2 NADP(+) = an anthocyanidin with a 3-hydroxy group + 2 NADPH + 2 H(+)</text>
        <dbReference type="Rhea" id="RHEA:51416"/>
        <dbReference type="ChEBI" id="CHEBI:15378"/>
        <dbReference type="ChEBI" id="CHEBI:57783"/>
        <dbReference type="ChEBI" id="CHEBI:58349"/>
        <dbReference type="ChEBI" id="CHEBI:134087"/>
        <dbReference type="ChEBI" id="CHEBI:134088"/>
        <dbReference type="EC" id="1.3.1.112"/>
    </reaction>
</comment>
<comment type="catalytic activity">
    <reaction evidence="3">
        <text>a (2S,3S)-flavan-3-ol + 2 NADP(+) = an anthocyanidin with a 3-hydroxy group + 2 NADPH + 2 H(+)</text>
        <dbReference type="Rhea" id="RHEA:51420"/>
        <dbReference type="ChEBI" id="CHEBI:15378"/>
        <dbReference type="ChEBI" id="CHEBI:57783"/>
        <dbReference type="ChEBI" id="CHEBI:58349"/>
        <dbReference type="ChEBI" id="CHEBI:134087"/>
        <dbReference type="ChEBI" id="CHEBI:134089"/>
        <dbReference type="EC" id="1.3.1.112"/>
    </reaction>
</comment>
<comment type="pathway">
    <text evidence="4">Secondary metabolite biosynthesis; flavonoid biosynthesis.</text>
</comment>
<comment type="miscellaneous">
    <text evidence="3">Hyperbolic binding of NADPH and NADP(+) to the free enzyme, with a single binding site each. The most likely enzymatic mechanism is sequential ordered Bi-Uni-Uni-Bi, with NADPH binding first and NADP(+) released last.</text>
</comment>
<comment type="miscellaneous">
    <text evidence="3">This enzyme is strictly pro-S stereospecific and the reaction mechanism involves two hydride transfers from two distinct NADPH molecules.</text>
</comment>
<comment type="similarity">
    <text evidence="4">Belongs to the NAD(P)-dependent epimerase/dehydratase family. Dihydroflavonol-4-reductase subfamily.</text>
</comment>